<dbReference type="EC" id="1.8.1.2" evidence="1"/>
<dbReference type="EMBL" id="CP000238">
    <property type="protein sequence ID" value="ABF14003.1"/>
    <property type="molecule type" value="Genomic_DNA"/>
</dbReference>
<dbReference type="RefSeq" id="WP_011520406.1">
    <property type="nucleotide sequence ID" value="NC_007984.1"/>
</dbReference>
<dbReference type="SMR" id="Q1LTP1"/>
<dbReference type="STRING" id="374463.BCI_0218"/>
<dbReference type="KEGG" id="bci:BCI_0218"/>
<dbReference type="HOGENOM" id="CLU_001570_17_7_6"/>
<dbReference type="OrthoDB" id="9816402at2"/>
<dbReference type="UniPathway" id="UPA00140">
    <property type="reaction ID" value="UER00207"/>
</dbReference>
<dbReference type="Proteomes" id="UP000002427">
    <property type="component" value="Chromosome"/>
</dbReference>
<dbReference type="GO" id="GO:0005829">
    <property type="term" value="C:cytosol"/>
    <property type="evidence" value="ECO:0007669"/>
    <property type="project" value="TreeGrafter"/>
</dbReference>
<dbReference type="GO" id="GO:0050660">
    <property type="term" value="F:flavin adenine dinucleotide binding"/>
    <property type="evidence" value="ECO:0007669"/>
    <property type="project" value="InterPro"/>
</dbReference>
<dbReference type="GO" id="GO:0010181">
    <property type="term" value="F:FMN binding"/>
    <property type="evidence" value="ECO:0007669"/>
    <property type="project" value="InterPro"/>
</dbReference>
<dbReference type="GO" id="GO:0004783">
    <property type="term" value="F:sulfite reductase (NADPH) activity"/>
    <property type="evidence" value="ECO:0007669"/>
    <property type="project" value="UniProtKB-UniRule"/>
</dbReference>
<dbReference type="GO" id="GO:0019344">
    <property type="term" value="P:cysteine biosynthetic process"/>
    <property type="evidence" value="ECO:0007669"/>
    <property type="project" value="UniProtKB-KW"/>
</dbReference>
<dbReference type="GO" id="GO:0070814">
    <property type="term" value="P:hydrogen sulfide biosynthetic process"/>
    <property type="evidence" value="ECO:0007669"/>
    <property type="project" value="UniProtKB-UniRule"/>
</dbReference>
<dbReference type="GO" id="GO:0000103">
    <property type="term" value="P:sulfate assimilation"/>
    <property type="evidence" value="ECO:0007669"/>
    <property type="project" value="UniProtKB-UniRule"/>
</dbReference>
<dbReference type="CDD" id="cd06199">
    <property type="entry name" value="SiR"/>
    <property type="match status" value="1"/>
</dbReference>
<dbReference type="FunFam" id="3.40.50.80:FF:000001">
    <property type="entry name" value="NADPH--cytochrome P450 reductase 1"/>
    <property type="match status" value="1"/>
</dbReference>
<dbReference type="Gene3D" id="3.40.50.360">
    <property type="match status" value="1"/>
</dbReference>
<dbReference type="Gene3D" id="1.20.990.10">
    <property type="entry name" value="NADPH-cytochrome p450 Reductase, Chain A, domain 3"/>
    <property type="match status" value="1"/>
</dbReference>
<dbReference type="Gene3D" id="3.40.50.80">
    <property type="entry name" value="Nucleotide-binding domain of ferredoxin-NADP reductase (FNR) module"/>
    <property type="match status" value="1"/>
</dbReference>
<dbReference type="Gene3D" id="2.40.30.10">
    <property type="entry name" value="Translation factors"/>
    <property type="match status" value="1"/>
</dbReference>
<dbReference type="HAMAP" id="MF_01541">
    <property type="entry name" value="CysJ"/>
    <property type="match status" value="1"/>
</dbReference>
<dbReference type="InterPro" id="IPR010199">
    <property type="entry name" value="CysJ"/>
</dbReference>
<dbReference type="InterPro" id="IPR003097">
    <property type="entry name" value="CysJ-like_FAD-binding"/>
</dbReference>
<dbReference type="InterPro" id="IPR029758">
    <property type="entry name" value="CysJ_Proteobact"/>
</dbReference>
<dbReference type="InterPro" id="IPR017927">
    <property type="entry name" value="FAD-bd_FR_type"/>
</dbReference>
<dbReference type="InterPro" id="IPR001094">
    <property type="entry name" value="Flavdoxin-like"/>
</dbReference>
<dbReference type="InterPro" id="IPR008254">
    <property type="entry name" value="Flavodoxin/NO_synth"/>
</dbReference>
<dbReference type="InterPro" id="IPR001709">
    <property type="entry name" value="Flavoprot_Pyr_Nucl_cyt_Rdtase"/>
</dbReference>
<dbReference type="InterPro" id="IPR029039">
    <property type="entry name" value="Flavoprotein-like_sf"/>
</dbReference>
<dbReference type="InterPro" id="IPR039261">
    <property type="entry name" value="FNR_nucleotide-bd"/>
</dbReference>
<dbReference type="InterPro" id="IPR023173">
    <property type="entry name" value="NADPH_Cyt_P450_Rdtase_alpha"/>
</dbReference>
<dbReference type="InterPro" id="IPR001433">
    <property type="entry name" value="OxRdtase_FAD/NAD-bd"/>
</dbReference>
<dbReference type="InterPro" id="IPR017938">
    <property type="entry name" value="Riboflavin_synthase-like_b-brl"/>
</dbReference>
<dbReference type="NCBIfam" id="TIGR01931">
    <property type="entry name" value="cysJ"/>
    <property type="match status" value="1"/>
</dbReference>
<dbReference type="NCBIfam" id="NF008197">
    <property type="entry name" value="PRK10953.1"/>
    <property type="match status" value="1"/>
</dbReference>
<dbReference type="PANTHER" id="PTHR19384:SF128">
    <property type="entry name" value="NADPH OXIDOREDUCTASE A"/>
    <property type="match status" value="1"/>
</dbReference>
<dbReference type="PANTHER" id="PTHR19384">
    <property type="entry name" value="NITRIC OXIDE SYNTHASE-RELATED"/>
    <property type="match status" value="1"/>
</dbReference>
<dbReference type="Pfam" id="PF00667">
    <property type="entry name" value="FAD_binding_1"/>
    <property type="match status" value="1"/>
</dbReference>
<dbReference type="Pfam" id="PF00258">
    <property type="entry name" value="Flavodoxin_1"/>
    <property type="match status" value="1"/>
</dbReference>
<dbReference type="Pfam" id="PF00175">
    <property type="entry name" value="NAD_binding_1"/>
    <property type="match status" value="1"/>
</dbReference>
<dbReference type="PIRSF" id="PIRSF000207">
    <property type="entry name" value="SiR-FP_CysJ"/>
    <property type="match status" value="1"/>
</dbReference>
<dbReference type="PRINTS" id="PR00369">
    <property type="entry name" value="FLAVODOXIN"/>
</dbReference>
<dbReference type="PRINTS" id="PR00371">
    <property type="entry name" value="FPNCR"/>
</dbReference>
<dbReference type="SUPFAM" id="SSF52343">
    <property type="entry name" value="Ferredoxin reductase-like, C-terminal NADP-linked domain"/>
    <property type="match status" value="1"/>
</dbReference>
<dbReference type="SUPFAM" id="SSF52218">
    <property type="entry name" value="Flavoproteins"/>
    <property type="match status" value="1"/>
</dbReference>
<dbReference type="SUPFAM" id="SSF63380">
    <property type="entry name" value="Riboflavin synthase domain-like"/>
    <property type="match status" value="1"/>
</dbReference>
<dbReference type="PROSITE" id="PS51384">
    <property type="entry name" value="FAD_FR"/>
    <property type="match status" value="1"/>
</dbReference>
<dbReference type="PROSITE" id="PS50902">
    <property type="entry name" value="FLAVODOXIN_LIKE"/>
    <property type="match status" value="1"/>
</dbReference>
<organism>
    <name type="scientific">Baumannia cicadellinicola subsp. Homalodisca coagulata</name>
    <dbReference type="NCBI Taxonomy" id="374463"/>
    <lineage>
        <taxon>Bacteria</taxon>
        <taxon>Pseudomonadati</taxon>
        <taxon>Pseudomonadota</taxon>
        <taxon>Gammaproteobacteria</taxon>
        <taxon>Candidatus Palibaumannia</taxon>
    </lineage>
</organism>
<name>CYSJ_BAUCH</name>
<sequence>MTQQNAPKDLPPLSAEQLDRLQAISSDLSNLQLAWASGYLWNKASHSIPIDYTASQQVITVLSASQTGNARRLAVQLYEDLLAAQLSVVIINAGDYKFKQIAQEKWLLIVTSTQGDGDPPEEAIALYKYLFSKKAPVLNNIQFAIFGLGDSSYTYFAKIGKDFDSRLAELGAQRLYDRVDADVDYQEKADIWRREIVKILQTKLVTVNAKQQLSVINNRIEVKNNLYTKEEPFTAHLVVKQKITSRSSKKDIRHLEIDIAGSGLNYQPGDALGVWYENDPVLISEILELLGLTGNELVQVKEKNIPLNEALQKHYELTNNTAEIVKSYAYITRNSSLLALVDDQQQLKQFAFSTPFIDMIQRIPVELHPKQLLTLLRPLMPRLYSIASSQAEVGDEVHLTVSVVRYEIDGKIRTGGASSYLAYRLQESEPIRVFIEHNDNFRLPNNPNTAIIMIGSGTGIAPFRGFMQQREATTAKGKNWLFFGNQHLTDDFLYQVEWQRYIKNGLLNKIDVAWSQDQNKKIYVQDRLLEKGIELWNWIQDGAHIYVCGNANLMARDVEKALVKLIAIHGRMDYEQADEFLSELRIARRFQRDTY</sequence>
<feature type="chain" id="PRO_0000292965" description="Sulfite reductase [NADPH] flavoprotein alpha-component">
    <location>
        <begin position="1"/>
        <end position="595"/>
    </location>
</feature>
<feature type="domain" description="Flavodoxin-like" evidence="1">
    <location>
        <begin position="59"/>
        <end position="197"/>
    </location>
</feature>
<feature type="domain" description="FAD-binding FR-type" evidence="1">
    <location>
        <begin position="230"/>
        <end position="444"/>
    </location>
</feature>
<feature type="binding site" evidence="1">
    <location>
        <begin position="65"/>
        <end position="70"/>
    </location>
    <ligand>
        <name>FMN</name>
        <dbReference type="ChEBI" id="CHEBI:58210"/>
    </ligand>
</feature>
<feature type="binding site" evidence="1">
    <location>
        <begin position="112"/>
        <end position="115"/>
    </location>
    <ligand>
        <name>FMN</name>
        <dbReference type="ChEBI" id="CHEBI:58210"/>
    </ligand>
</feature>
<feature type="binding site" evidence="1">
    <location>
        <begin position="148"/>
        <end position="157"/>
    </location>
    <ligand>
        <name>FMN</name>
        <dbReference type="ChEBI" id="CHEBI:58210"/>
    </ligand>
</feature>
<feature type="binding site" evidence="1">
    <location>
        <position position="318"/>
    </location>
    <ligand>
        <name>FAD</name>
        <dbReference type="ChEBI" id="CHEBI:57692"/>
    </ligand>
</feature>
<feature type="binding site" evidence="1">
    <location>
        <position position="352"/>
    </location>
    <ligand>
        <name>FAD</name>
        <dbReference type="ChEBI" id="CHEBI:57692"/>
    </ligand>
</feature>
<feature type="binding site" evidence="1">
    <location>
        <begin position="382"/>
        <end position="385"/>
    </location>
    <ligand>
        <name>FAD</name>
        <dbReference type="ChEBI" id="CHEBI:57692"/>
    </ligand>
</feature>
<feature type="binding site" evidence="1">
    <location>
        <begin position="400"/>
        <end position="402"/>
    </location>
    <ligand>
        <name>FAD</name>
        <dbReference type="ChEBI" id="CHEBI:57692"/>
    </ligand>
</feature>
<feature type="binding site" evidence="1">
    <location>
        <position position="406"/>
    </location>
    <ligand>
        <name>FAD</name>
        <dbReference type="ChEBI" id="CHEBI:57692"/>
    </ligand>
</feature>
<feature type="binding site" evidence="1">
    <location>
        <begin position="415"/>
        <end position="418"/>
    </location>
    <ligand>
        <name>FAD</name>
        <dbReference type="ChEBI" id="CHEBI:57692"/>
    </ligand>
</feature>
<feature type="binding site" evidence="1">
    <location>
        <begin position="515"/>
        <end position="516"/>
    </location>
    <ligand>
        <name>NADP(+)</name>
        <dbReference type="ChEBI" id="CHEBI:58349"/>
    </ligand>
</feature>
<feature type="binding site" evidence="1">
    <location>
        <begin position="521"/>
        <end position="525"/>
    </location>
    <ligand>
        <name>NADP(+)</name>
        <dbReference type="ChEBI" id="CHEBI:58349"/>
    </ligand>
</feature>
<feature type="binding site" evidence="1">
    <location>
        <position position="557"/>
    </location>
    <ligand>
        <name>NADP(+)</name>
        <dbReference type="ChEBI" id="CHEBI:58349"/>
    </ligand>
</feature>
<feature type="binding site" evidence="1">
    <location>
        <position position="595"/>
    </location>
    <ligand>
        <name>FAD</name>
        <dbReference type="ChEBI" id="CHEBI:57692"/>
    </ligand>
</feature>
<comment type="function">
    <text evidence="1">Component of the sulfite reductase complex that catalyzes the 6-electron reduction of sulfite to sulfide. This is one of several activities required for the biosynthesis of L-cysteine from sulfate. The flavoprotein component catalyzes the electron flow from NADPH -&gt; FAD -&gt; FMN to the hemoprotein component.</text>
</comment>
<comment type="catalytic activity">
    <reaction evidence="1">
        <text>hydrogen sulfide + 3 NADP(+) + 3 H2O = sulfite + 3 NADPH + 4 H(+)</text>
        <dbReference type="Rhea" id="RHEA:13801"/>
        <dbReference type="ChEBI" id="CHEBI:15377"/>
        <dbReference type="ChEBI" id="CHEBI:15378"/>
        <dbReference type="ChEBI" id="CHEBI:17359"/>
        <dbReference type="ChEBI" id="CHEBI:29919"/>
        <dbReference type="ChEBI" id="CHEBI:57783"/>
        <dbReference type="ChEBI" id="CHEBI:58349"/>
        <dbReference type="EC" id="1.8.1.2"/>
    </reaction>
</comment>
<comment type="cofactor">
    <cofactor evidence="1">
        <name>FAD</name>
        <dbReference type="ChEBI" id="CHEBI:57692"/>
    </cofactor>
    <text evidence="1">Binds 1 FAD per subunit.</text>
</comment>
<comment type="cofactor">
    <cofactor evidence="1">
        <name>FMN</name>
        <dbReference type="ChEBI" id="CHEBI:58210"/>
    </cofactor>
    <text evidence="1">Binds 1 FMN per subunit.</text>
</comment>
<comment type="pathway">
    <text evidence="1">Sulfur metabolism; hydrogen sulfide biosynthesis; hydrogen sulfide from sulfite (NADPH route): step 1/1.</text>
</comment>
<comment type="subunit">
    <text evidence="1">Alpha(8)-beta(8). The alpha component is a flavoprotein, the beta component is a hemoprotein.</text>
</comment>
<comment type="similarity">
    <text evidence="1">Belongs to the NADPH-dependent sulphite reductase flavoprotein subunit CysJ family.</text>
</comment>
<comment type="similarity">
    <text evidence="1">In the N-terminal section; belongs to the flavodoxin family.</text>
</comment>
<comment type="similarity">
    <text evidence="1">In the C-terminal section; belongs to the flavoprotein pyridine nucleotide cytochrome reductase family.</text>
</comment>
<proteinExistence type="inferred from homology"/>
<evidence type="ECO:0000255" key="1">
    <source>
        <dbReference type="HAMAP-Rule" id="MF_01541"/>
    </source>
</evidence>
<reference key="1">
    <citation type="journal article" date="2006" name="PLoS Biol.">
        <title>Metabolic complementarity and genomics of the dual bacterial symbiosis of sharpshooters.</title>
        <authorList>
            <person name="Wu D."/>
            <person name="Daugherty S.C."/>
            <person name="Van Aken S.E."/>
            <person name="Pai G.H."/>
            <person name="Watkins K.L."/>
            <person name="Khouri H."/>
            <person name="Tallon L.J."/>
            <person name="Zaborsky J.M."/>
            <person name="Dunbar H.E."/>
            <person name="Tran P.L."/>
            <person name="Moran N.A."/>
            <person name="Eisen J.A."/>
        </authorList>
    </citation>
    <scope>NUCLEOTIDE SEQUENCE [LARGE SCALE GENOMIC DNA]</scope>
</reference>
<keyword id="KW-0028">Amino-acid biosynthesis</keyword>
<keyword id="KW-0198">Cysteine biosynthesis</keyword>
<keyword id="KW-0249">Electron transport</keyword>
<keyword id="KW-0274">FAD</keyword>
<keyword id="KW-0285">Flavoprotein</keyword>
<keyword id="KW-0288">FMN</keyword>
<keyword id="KW-0521">NADP</keyword>
<keyword id="KW-0560">Oxidoreductase</keyword>
<keyword id="KW-1185">Reference proteome</keyword>
<keyword id="KW-0813">Transport</keyword>
<gene>
    <name evidence="1" type="primary">cysJ</name>
    <name type="ordered locus">BCI_0218</name>
</gene>
<protein>
    <recommendedName>
        <fullName evidence="1">Sulfite reductase [NADPH] flavoprotein alpha-component</fullName>
        <shortName evidence="1">SiR-FP</shortName>
        <ecNumber evidence="1">1.8.1.2</ecNumber>
    </recommendedName>
</protein>
<accession>Q1LTP1</accession>